<proteinExistence type="inferred from homology"/>
<protein>
    <recommendedName>
        <fullName evidence="1">Large ribosomal subunit protein uL29c</fullName>
    </recommendedName>
    <alternativeName>
        <fullName evidence="2">50S ribosomal protein L29, chloroplastic</fullName>
    </alternativeName>
</protein>
<reference key="1">
    <citation type="journal article" date="2007" name="Mol. Genet. Genomics">
        <title>Chloroplast genomes of the diatoms Phaeodactylum tricornutum and Thalassiosira pseudonana: comparison with other plastid genomes of the red lineage.</title>
        <authorList>
            <person name="Oudot-Le Secq M.-P."/>
            <person name="Grimwood J."/>
            <person name="Shapiro H."/>
            <person name="Armbrust E.V."/>
            <person name="Bowler C."/>
            <person name="Green B.R."/>
        </authorList>
    </citation>
    <scope>NUCLEOTIDE SEQUENCE [LARGE SCALE GENOMIC DNA]</scope>
    <source>
        <strain>CCAP 1055/1</strain>
    </source>
</reference>
<keyword id="KW-0150">Chloroplast</keyword>
<keyword id="KW-0934">Plastid</keyword>
<keyword id="KW-1185">Reference proteome</keyword>
<keyword id="KW-0687">Ribonucleoprotein</keyword>
<keyword id="KW-0689">Ribosomal protein</keyword>
<accession>A0T0I7</accession>
<geneLocation type="chloroplast"/>
<name>RK29_PHATC</name>
<gene>
    <name evidence="1" type="primary">rpl29</name>
</gene>
<evidence type="ECO:0000255" key="1">
    <source>
        <dbReference type="HAMAP-Rule" id="MF_00374"/>
    </source>
</evidence>
<evidence type="ECO:0000305" key="2"/>
<comment type="subcellular location">
    <subcellularLocation>
        <location>Plastid</location>
        <location>Chloroplast</location>
    </subcellularLocation>
</comment>
<comment type="similarity">
    <text evidence="1">Belongs to the universal ribosomal protein uL29 family.</text>
</comment>
<dbReference type="EMBL" id="EF067920">
    <property type="protein sequence ID" value="ABK20685.1"/>
    <property type="molecule type" value="Genomic_DNA"/>
</dbReference>
<dbReference type="RefSeq" id="YP_874462.1">
    <property type="nucleotide sequence ID" value="NC_008588.1"/>
</dbReference>
<dbReference type="SMR" id="A0T0I7"/>
<dbReference type="GeneID" id="4524664"/>
<dbReference type="InParanoid" id="A0T0I7"/>
<dbReference type="Proteomes" id="UP000000759">
    <property type="component" value="Chloroplast"/>
</dbReference>
<dbReference type="GO" id="GO:0009507">
    <property type="term" value="C:chloroplast"/>
    <property type="evidence" value="ECO:0007669"/>
    <property type="project" value="UniProtKB-SubCell"/>
</dbReference>
<dbReference type="GO" id="GO:0022625">
    <property type="term" value="C:cytosolic large ribosomal subunit"/>
    <property type="evidence" value="ECO:0007669"/>
    <property type="project" value="TreeGrafter"/>
</dbReference>
<dbReference type="GO" id="GO:0003735">
    <property type="term" value="F:structural constituent of ribosome"/>
    <property type="evidence" value="ECO:0007669"/>
    <property type="project" value="InterPro"/>
</dbReference>
<dbReference type="GO" id="GO:0006412">
    <property type="term" value="P:translation"/>
    <property type="evidence" value="ECO:0007669"/>
    <property type="project" value="UniProtKB-UniRule"/>
</dbReference>
<dbReference type="CDD" id="cd00427">
    <property type="entry name" value="Ribosomal_L29_HIP"/>
    <property type="match status" value="1"/>
</dbReference>
<dbReference type="Gene3D" id="1.10.287.310">
    <property type="match status" value="1"/>
</dbReference>
<dbReference type="HAMAP" id="MF_00374">
    <property type="entry name" value="Ribosomal_uL29"/>
    <property type="match status" value="1"/>
</dbReference>
<dbReference type="InterPro" id="IPR050063">
    <property type="entry name" value="Ribosomal_protein_uL29"/>
</dbReference>
<dbReference type="InterPro" id="IPR001854">
    <property type="entry name" value="Ribosomal_uL29"/>
</dbReference>
<dbReference type="InterPro" id="IPR018254">
    <property type="entry name" value="Ribosomal_uL29_CS"/>
</dbReference>
<dbReference type="InterPro" id="IPR036049">
    <property type="entry name" value="Ribosomal_uL29_sf"/>
</dbReference>
<dbReference type="NCBIfam" id="TIGR00012">
    <property type="entry name" value="L29"/>
    <property type="match status" value="1"/>
</dbReference>
<dbReference type="PANTHER" id="PTHR10916">
    <property type="entry name" value="60S RIBOSOMAL PROTEIN L35/50S RIBOSOMAL PROTEIN L29"/>
    <property type="match status" value="1"/>
</dbReference>
<dbReference type="PANTHER" id="PTHR10916:SF0">
    <property type="entry name" value="LARGE RIBOSOMAL SUBUNIT PROTEIN UL29C"/>
    <property type="match status" value="1"/>
</dbReference>
<dbReference type="Pfam" id="PF00831">
    <property type="entry name" value="Ribosomal_L29"/>
    <property type="match status" value="1"/>
</dbReference>
<dbReference type="SUPFAM" id="SSF46561">
    <property type="entry name" value="Ribosomal protein L29 (L29p)"/>
    <property type="match status" value="1"/>
</dbReference>
<dbReference type="PROSITE" id="PS00579">
    <property type="entry name" value="RIBOSOMAL_L29"/>
    <property type="match status" value="1"/>
</dbReference>
<organism>
    <name type="scientific">Phaeodactylum tricornutum (strain CCAP 1055/1)</name>
    <dbReference type="NCBI Taxonomy" id="556484"/>
    <lineage>
        <taxon>Eukaryota</taxon>
        <taxon>Sar</taxon>
        <taxon>Stramenopiles</taxon>
        <taxon>Ochrophyta</taxon>
        <taxon>Bacillariophyta</taxon>
        <taxon>Bacillariophyceae</taxon>
        <taxon>Bacillariophycidae</taxon>
        <taxon>Naviculales</taxon>
        <taxon>Phaeodactylaceae</taxon>
        <taxon>Phaeodactylum</taxon>
    </lineage>
</organism>
<feature type="chain" id="PRO_0000276460" description="Large ribosomal subunit protein uL29c">
    <location>
        <begin position="1"/>
        <end position="81"/>
    </location>
</feature>
<sequence length="81" mass="9352">MSLPAFTEISSFSNTEISVAIIETENQLFNLRFKKATRQSFKSHEIKNAKRRLAQLKTLLSLRLENLDQKDDNLINTLITN</sequence>